<comment type="function">
    <text evidence="1">Succinyl-CoA synthetase functions in the citric acid cycle (TCA), coupling the hydrolysis of succinyl-CoA to the synthesis of either ATP or GTP and thus represents the only step of substrate-level phosphorylation in the TCA. The beta subunit provides nucleotide specificity of the enzyme and binds the substrate succinate, while the binding sites for coenzyme A and phosphate are found in the alpha subunit.</text>
</comment>
<comment type="catalytic activity">
    <reaction evidence="1">
        <text>succinate + ATP + CoA = succinyl-CoA + ADP + phosphate</text>
        <dbReference type="Rhea" id="RHEA:17661"/>
        <dbReference type="ChEBI" id="CHEBI:30031"/>
        <dbReference type="ChEBI" id="CHEBI:30616"/>
        <dbReference type="ChEBI" id="CHEBI:43474"/>
        <dbReference type="ChEBI" id="CHEBI:57287"/>
        <dbReference type="ChEBI" id="CHEBI:57292"/>
        <dbReference type="ChEBI" id="CHEBI:456216"/>
        <dbReference type="EC" id="6.2.1.5"/>
    </reaction>
    <physiologicalReaction direction="right-to-left" evidence="1">
        <dbReference type="Rhea" id="RHEA:17663"/>
    </physiologicalReaction>
</comment>
<comment type="catalytic activity">
    <reaction evidence="1">
        <text>GTP + succinate + CoA = succinyl-CoA + GDP + phosphate</text>
        <dbReference type="Rhea" id="RHEA:22120"/>
        <dbReference type="ChEBI" id="CHEBI:30031"/>
        <dbReference type="ChEBI" id="CHEBI:37565"/>
        <dbReference type="ChEBI" id="CHEBI:43474"/>
        <dbReference type="ChEBI" id="CHEBI:57287"/>
        <dbReference type="ChEBI" id="CHEBI:57292"/>
        <dbReference type="ChEBI" id="CHEBI:58189"/>
    </reaction>
    <physiologicalReaction direction="right-to-left" evidence="1">
        <dbReference type="Rhea" id="RHEA:22122"/>
    </physiologicalReaction>
</comment>
<comment type="cofactor">
    <cofactor evidence="1">
        <name>Mg(2+)</name>
        <dbReference type="ChEBI" id="CHEBI:18420"/>
    </cofactor>
    <text evidence="1">Binds 1 Mg(2+) ion per subunit.</text>
</comment>
<comment type="pathway">
    <text evidence="1">Carbohydrate metabolism; tricarboxylic acid cycle; succinate from succinyl-CoA (ligase route): step 1/1.</text>
</comment>
<comment type="subunit">
    <text evidence="1">Heterotetramer of two alpha and two beta subunits.</text>
</comment>
<comment type="similarity">
    <text evidence="1">Belongs to the succinate/malate CoA ligase beta subunit family.</text>
</comment>
<sequence length="388" mass="41445">MNLHEYQGKQLFKEYGLPVSEGYAADTAQGAVEAADRIGGEEWVVKCQVHAGGRGKAGGVKLVKNKDDIRAFAENWLGKNLVTFQTDENGQPVSKILVESCTDIANELYLGAVVDRTTRRVVFMASTEGGVEIETVAEETPEKILKAEIDPIVGPQPYQAREMAFALGLSGVQIKQFTQIFLGLAKMFEELDVALIEINPLVIKTDGNLHCLDAKVGIDGNALYRQPKLKDMQDPSQEDAREAHAAQWELNYVALDGNVGCMVNGAGLAMGTMDIVNLHGGKPANFLDVGGGATKERVAEAFKIILSDDNVKAVLVNIFGGIVRCDMIAEGIIGAVKEVGVEVPVVVRLEGTNAELGREVLANSGLDIIAAESLTDAAQKVVAAAEGK</sequence>
<protein>
    <recommendedName>
        <fullName evidence="1">Succinate--CoA ligase [ADP-forming] subunit beta</fullName>
        <ecNumber evidence="1">6.2.1.5</ecNumber>
    </recommendedName>
    <alternativeName>
        <fullName evidence="1">Succinyl-CoA synthetase subunit beta</fullName>
        <shortName evidence="1">SCS-beta</shortName>
    </alternativeName>
</protein>
<organism>
    <name type="scientific">Alteromonas mediterranea (strain DSM 17117 / CIP 110805 / LMG 28347 / Deep ecotype)</name>
    <dbReference type="NCBI Taxonomy" id="1774373"/>
    <lineage>
        <taxon>Bacteria</taxon>
        <taxon>Pseudomonadati</taxon>
        <taxon>Pseudomonadota</taxon>
        <taxon>Gammaproteobacteria</taxon>
        <taxon>Alteromonadales</taxon>
        <taxon>Alteromonadaceae</taxon>
        <taxon>Alteromonas/Salinimonas group</taxon>
        <taxon>Alteromonas</taxon>
    </lineage>
</organism>
<dbReference type="EC" id="6.2.1.5" evidence="1"/>
<dbReference type="EMBL" id="CP001103">
    <property type="protein sequence ID" value="AEA98039.1"/>
    <property type="molecule type" value="Genomic_DNA"/>
</dbReference>
<dbReference type="RefSeq" id="WP_012518365.1">
    <property type="nucleotide sequence ID" value="NC_011138.3"/>
</dbReference>
<dbReference type="SMR" id="B4RYG2"/>
<dbReference type="GeneID" id="56342397"/>
<dbReference type="KEGG" id="amc:MADE_1009505"/>
<dbReference type="HOGENOM" id="CLU_037430_0_2_6"/>
<dbReference type="UniPathway" id="UPA00223">
    <property type="reaction ID" value="UER00999"/>
</dbReference>
<dbReference type="Proteomes" id="UP000001870">
    <property type="component" value="Chromosome"/>
</dbReference>
<dbReference type="GO" id="GO:0005829">
    <property type="term" value="C:cytosol"/>
    <property type="evidence" value="ECO:0007669"/>
    <property type="project" value="TreeGrafter"/>
</dbReference>
<dbReference type="GO" id="GO:0042709">
    <property type="term" value="C:succinate-CoA ligase complex"/>
    <property type="evidence" value="ECO:0007669"/>
    <property type="project" value="TreeGrafter"/>
</dbReference>
<dbReference type="GO" id="GO:0005524">
    <property type="term" value="F:ATP binding"/>
    <property type="evidence" value="ECO:0007669"/>
    <property type="project" value="UniProtKB-UniRule"/>
</dbReference>
<dbReference type="GO" id="GO:0000287">
    <property type="term" value="F:magnesium ion binding"/>
    <property type="evidence" value="ECO:0007669"/>
    <property type="project" value="UniProtKB-UniRule"/>
</dbReference>
<dbReference type="GO" id="GO:0004775">
    <property type="term" value="F:succinate-CoA ligase (ADP-forming) activity"/>
    <property type="evidence" value="ECO:0007669"/>
    <property type="project" value="UniProtKB-UniRule"/>
</dbReference>
<dbReference type="GO" id="GO:0004776">
    <property type="term" value="F:succinate-CoA ligase (GDP-forming) activity"/>
    <property type="evidence" value="ECO:0007669"/>
    <property type="project" value="RHEA"/>
</dbReference>
<dbReference type="GO" id="GO:0006104">
    <property type="term" value="P:succinyl-CoA metabolic process"/>
    <property type="evidence" value="ECO:0007669"/>
    <property type="project" value="TreeGrafter"/>
</dbReference>
<dbReference type="GO" id="GO:0006099">
    <property type="term" value="P:tricarboxylic acid cycle"/>
    <property type="evidence" value="ECO:0007669"/>
    <property type="project" value="UniProtKB-UniRule"/>
</dbReference>
<dbReference type="FunFam" id="3.30.1490.20:FF:000002">
    <property type="entry name" value="Succinate--CoA ligase [ADP-forming] subunit beta"/>
    <property type="match status" value="1"/>
</dbReference>
<dbReference type="FunFam" id="3.30.470.20:FF:000002">
    <property type="entry name" value="Succinate--CoA ligase [ADP-forming] subunit beta"/>
    <property type="match status" value="1"/>
</dbReference>
<dbReference type="FunFam" id="3.40.50.261:FF:000001">
    <property type="entry name" value="Succinate--CoA ligase [ADP-forming] subunit beta"/>
    <property type="match status" value="1"/>
</dbReference>
<dbReference type="Gene3D" id="3.30.1490.20">
    <property type="entry name" value="ATP-grasp fold, A domain"/>
    <property type="match status" value="1"/>
</dbReference>
<dbReference type="Gene3D" id="3.30.470.20">
    <property type="entry name" value="ATP-grasp fold, B domain"/>
    <property type="match status" value="1"/>
</dbReference>
<dbReference type="Gene3D" id="3.40.50.261">
    <property type="entry name" value="Succinyl-CoA synthetase domains"/>
    <property type="match status" value="1"/>
</dbReference>
<dbReference type="HAMAP" id="MF_00558">
    <property type="entry name" value="Succ_CoA_beta"/>
    <property type="match status" value="1"/>
</dbReference>
<dbReference type="InterPro" id="IPR011761">
    <property type="entry name" value="ATP-grasp"/>
</dbReference>
<dbReference type="InterPro" id="IPR013650">
    <property type="entry name" value="ATP-grasp_succ-CoA_synth-type"/>
</dbReference>
<dbReference type="InterPro" id="IPR013815">
    <property type="entry name" value="ATP_grasp_subdomain_1"/>
</dbReference>
<dbReference type="InterPro" id="IPR017866">
    <property type="entry name" value="Succ-CoA_synthase_bsu_CS"/>
</dbReference>
<dbReference type="InterPro" id="IPR005811">
    <property type="entry name" value="SUCC_ACL_C"/>
</dbReference>
<dbReference type="InterPro" id="IPR005809">
    <property type="entry name" value="Succ_CoA_ligase-like_bsu"/>
</dbReference>
<dbReference type="InterPro" id="IPR016102">
    <property type="entry name" value="Succinyl-CoA_synth-like"/>
</dbReference>
<dbReference type="NCBIfam" id="NF001913">
    <property type="entry name" value="PRK00696.1"/>
    <property type="match status" value="1"/>
</dbReference>
<dbReference type="NCBIfam" id="TIGR01016">
    <property type="entry name" value="sucCoAbeta"/>
    <property type="match status" value="1"/>
</dbReference>
<dbReference type="PANTHER" id="PTHR11815:SF10">
    <property type="entry name" value="SUCCINATE--COA LIGASE [GDP-FORMING] SUBUNIT BETA, MITOCHONDRIAL"/>
    <property type="match status" value="1"/>
</dbReference>
<dbReference type="PANTHER" id="PTHR11815">
    <property type="entry name" value="SUCCINYL-COA SYNTHETASE BETA CHAIN"/>
    <property type="match status" value="1"/>
</dbReference>
<dbReference type="Pfam" id="PF08442">
    <property type="entry name" value="ATP-grasp_2"/>
    <property type="match status" value="1"/>
</dbReference>
<dbReference type="Pfam" id="PF00549">
    <property type="entry name" value="Ligase_CoA"/>
    <property type="match status" value="1"/>
</dbReference>
<dbReference type="PIRSF" id="PIRSF001554">
    <property type="entry name" value="SucCS_beta"/>
    <property type="match status" value="1"/>
</dbReference>
<dbReference type="SUPFAM" id="SSF56059">
    <property type="entry name" value="Glutathione synthetase ATP-binding domain-like"/>
    <property type="match status" value="1"/>
</dbReference>
<dbReference type="SUPFAM" id="SSF52210">
    <property type="entry name" value="Succinyl-CoA synthetase domains"/>
    <property type="match status" value="1"/>
</dbReference>
<dbReference type="PROSITE" id="PS50975">
    <property type="entry name" value="ATP_GRASP"/>
    <property type="match status" value="1"/>
</dbReference>
<dbReference type="PROSITE" id="PS01217">
    <property type="entry name" value="SUCCINYL_COA_LIG_3"/>
    <property type="match status" value="1"/>
</dbReference>
<proteinExistence type="inferred from homology"/>
<reference key="1">
    <citation type="journal article" date="2008" name="ISME J.">
        <title>Comparative genomics of two ecotypes of the marine planktonic copiotroph Alteromonas macleodii suggests alternative lifestyles associated with different kinds of particulate organic matter.</title>
        <authorList>
            <person name="Ivars-Martinez E."/>
            <person name="Martin-Cuadrado A.-B."/>
            <person name="D'Auria G."/>
            <person name="Mira A."/>
            <person name="Ferriera S."/>
            <person name="Johnson J."/>
            <person name="Friedman R."/>
            <person name="Rodriguez-Valera F."/>
        </authorList>
    </citation>
    <scope>NUCLEOTIDE SEQUENCE [LARGE SCALE GENOMIC DNA]</scope>
    <source>
        <strain>DSM 17117 / CIP 110805 / LMG 28347 / Deep ecotype</strain>
    </source>
</reference>
<keyword id="KW-0067">ATP-binding</keyword>
<keyword id="KW-0436">Ligase</keyword>
<keyword id="KW-0460">Magnesium</keyword>
<keyword id="KW-0479">Metal-binding</keyword>
<keyword id="KW-0547">Nucleotide-binding</keyword>
<keyword id="KW-0816">Tricarboxylic acid cycle</keyword>
<evidence type="ECO:0000255" key="1">
    <source>
        <dbReference type="HAMAP-Rule" id="MF_00558"/>
    </source>
</evidence>
<feature type="chain" id="PRO_1000129157" description="Succinate--CoA ligase [ADP-forming] subunit beta">
    <location>
        <begin position="1"/>
        <end position="388"/>
    </location>
</feature>
<feature type="domain" description="ATP-grasp" evidence="1">
    <location>
        <begin position="9"/>
        <end position="244"/>
    </location>
</feature>
<feature type="binding site" evidence="1">
    <location>
        <position position="46"/>
    </location>
    <ligand>
        <name>ATP</name>
        <dbReference type="ChEBI" id="CHEBI:30616"/>
    </ligand>
</feature>
<feature type="binding site" evidence="1">
    <location>
        <begin position="53"/>
        <end position="55"/>
    </location>
    <ligand>
        <name>ATP</name>
        <dbReference type="ChEBI" id="CHEBI:30616"/>
    </ligand>
</feature>
<feature type="binding site" evidence="1">
    <location>
        <position position="99"/>
    </location>
    <ligand>
        <name>ATP</name>
        <dbReference type="ChEBI" id="CHEBI:30616"/>
    </ligand>
</feature>
<feature type="binding site" evidence="1">
    <location>
        <position position="102"/>
    </location>
    <ligand>
        <name>ATP</name>
        <dbReference type="ChEBI" id="CHEBI:30616"/>
    </ligand>
</feature>
<feature type="binding site" evidence="1">
    <location>
        <position position="107"/>
    </location>
    <ligand>
        <name>ATP</name>
        <dbReference type="ChEBI" id="CHEBI:30616"/>
    </ligand>
</feature>
<feature type="binding site" evidence="1">
    <location>
        <position position="199"/>
    </location>
    <ligand>
        <name>Mg(2+)</name>
        <dbReference type="ChEBI" id="CHEBI:18420"/>
    </ligand>
</feature>
<feature type="binding site" evidence="1">
    <location>
        <position position="213"/>
    </location>
    <ligand>
        <name>Mg(2+)</name>
        <dbReference type="ChEBI" id="CHEBI:18420"/>
    </ligand>
</feature>
<feature type="binding site" evidence="1">
    <location>
        <position position="264"/>
    </location>
    <ligand>
        <name>substrate</name>
        <note>ligand shared with subunit alpha</note>
    </ligand>
</feature>
<feature type="binding site" evidence="1">
    <location>
        <begin position="321"/>
        <end position="323"/>
    </location>
    <ligand>
        <name>substrate</name>
        <note>ligand shared with subunit alpha</note>
    </ligand>
</feature>
<gene>
    <name evidence="1" type="primary">sucC</name>
    <name type="ordered locus">MADE_1009505</name>
</gene>
<accession>B4RYG2</accession>
<accession>F2GC23</accession>
<name>SUCC_ALTMD</name>